<sequence length="1657" mass="183737">MDSKKRSSTEAEGSKERGLVHIWQAGSFPITPERLPGWGGKTVLQAALGVKHGVLLTEDGEVYSFGTLPWRSGPVEICPSSPILENALVGQYVVTVATGSFHSGAVTDNGVAYMWGENSAGQCAVANQQYVPEPNPVSIADSEASPLLAVRILQLACGEEHTLALSISREIWAWGTGCQLGLITTAFPVTKPQKVEHLAGRVVLQVACGAFHSLALVQCLPSQDLKPVPERCNQCSQLLITMTDKEDHVIISDSHCCPLGVTLTESQAENHASTALSPSTETLDRQEEVFENTLVANDQSVATELNAVSAQITSSDAMSSQQNVMGTTEISSARNIPSYPDTQAVNEYLRKLSDHSVREDSEHGEKPMPSQPLLEEAIPNLHSPPTTSTSALNSLVVSCASAVGVRVAATYEAGALSLKKVMNFYSTTPCETGAQAGSSAIGPEGLKDSREEQVKQESMQGKKSSSLVDIREEETEGGSRRLSLPGLLSQVSPRLLRKAARVKTRTVVLTPTYSGEADALLPSLRTEVWTWGKGKEGQLGHGDVLPRLQPLCVKCLDGKEVIHLEAGGYHSLALTAKSQVYSWGSNTFGQLGHSDFPTTVPRLAKISSENGVWSVAAGRDYSLFLVDTEDFQPGLYYSGRQDPTEGDNLPENHSGSKTPVLLSCSKLGYISRVTAGKDSYLALVDKNIMGYIASLHELATTERRFYSKLSDIKSQILRPLLSLENLGTTTTVQLLQEVASRFSKLCYLIGQHGASLSSFLHGVKEARSLVILKHSSLFLDSYTEYCTSITNFLVMGGFQLLAKPAIDFLNKNQELLQDLSEVNDENTQLMEILNTLFFLPIRRLHNYAKVLLKLATCFEVASPEYQKLQDSSSCYECLALHLGRKRKEAEYTLGFWKTFPGKMTDSLRKPERRLLCESSNRALSLQHAGRFSVNWFILFNDALVHAQFSTHHVFPLATLWAEPLSEEAGGVNGLKITTPEEQFTLISSTPQEKTKWLRAISQAVDQALRGMSDLPPYGSGSSVQRQEPPISRSAKYTFYKDPRLKDATYDGRWLSGKPHGRGVLKWPDGKMYSGMFRNGLEDGYGEYRIPNKAMNKEDHYVGHWKEGKMCGQGVYSYASGEVFEGCFQDNMRHGHGLLRSGKLTSSSPSMFIGQWVMDKKAGYGVFDDITRGEKYMGMWQDDVCQGNGVVVTQFGLYYEGNFHLNKMMGNGVLLSEDDTIYEGEFSDDWTLSGKGTLTMPNGDYIEGYFSGEWGSGIKITGTYFKPSLYESDKDRPKVFRKLRNLAVPADEKWKAVFDECWRQLGCEGPGQGEVWKAWDNIAVALTTSRRQHRDSPEILSRSQTQTLESLEFIPQHVGAFSVEKYDDIRKYLIKACDTPLHPLGRLVETLVAVYRMTYVGVGANRRLLQEAVKEIKSYLKRIFQLVRFLFPELPEEGSTIPLSAPLPTERKSFCTGKSDSRSESPEPGYVVTSSGLLLPVLLPRLYPPLFMLYALDNDREEDIYWECVLRLNKQPDIALLGFLGVQRKFWPATLSILGESKKVLPTTKDACFASAVECLQQISTTFTPSDKLKVIQQTFEEISQSVLASLHEDFLWSMDDLFPVFLYVVLRARIRNLGSEVHLIEDLMDPYLQHGEQGIMFTTLKACYYQIQREKLN</sequence>
<accession>Q5BIW4</accession>
<accession>Q29R55</accession>
<dbReference type="EMBL" id="BK005194">
    <property type="protein sequence ID" value="DAA05675.1"/>
    <property type="molecule type" value="mRNA"/>
</dbReference>
<dbReference type="RefSeq" id="NP_001073389.1">
    <property type="nucleotide sequence ID" value="NM_001079920.2"/>
</dbReference>
<dbReference type="STRING" id="9598.ENSPTRP00000021899"/>
<dbReference type="PaxDb" id="9598-ENSPTRP00000021899"/>
<dbReference type="GeneID" id="470613"/>
<dbReference type="KEGG" id="ptr:470613"/>
<dbReference type="CTD" id="57679"/>
<dbReference type="eggNOG" id="KOG0231">
    <property type="taxonomic scope" value="Eukaryota"/>
</dbReference>
<dbReference type="eggNOG" id="KOG1426">
    <property type="taxonomic scope" value="Eukaryota"/>
</dbReference>
<dbReference type="InParanoid" id="Q5BIW4"/>
<dbReference type="OrthoDB" id="2758at9604"/>
<dbReference type="Proteomes" id="UP000002277">
    <property type="component" value="Unplaced"/>
</dbReference>
<dbReference type="GO" id="GO:0005813">
    <property type="term" value="C:centrosome"/>
    <property type="evidence" value="ECO:0000318"/>
    <property type="project" value="GO_Central"/>
</dbReference>
<dbReference type="GO" id="GO:0005737">
    <property type="term" value="C:cytoplasm"/>
    <property type="evidence" value="ECO:0000250"/>
    <property type="project" value="UniProtKB"/>
</dbReference>
<dbReference type="GO" id="GO:0005829">
    <property type="term" value="C:cytosol"/>
    <property type="evidence" value="ECO:0000250"/>
    <property type="project" value="UniProtKB"/>
</dbReference>
<dbReference type="GO" id="GO:0030425">
    <property type="term" value="C:dendrite"/>
    <property type="evidence" value="ECO:0000250"/>
    <property type="project" value="UniProtKB"/>
</dbReference>
<dbReference type="GO" id="GO:0043197">
    <property type="term" value="C:dendritic spine"/>
    <property type="evidence" value="ECO:0000250"/>
    <property type="project" value="UniProtKB"/>
</dbReference>
<dbReference type="GO" id="GO:0005769">
    <property type="term" value="C:early endosome"/>
    <property type="evidence" value="ECO:0000250"/>
    <property type="project" value="UniProtKB"/>
</dbReference>
<dbReference type="GO" id="GO:0043231">
    <property type="term" value="C:intracellular membrane-bounded organelle"/>
    <property type="evidence" value="ECO:0000318"/>
    <property type="project" value="GO_Central"/>
</dbReference>
<dbReference type="GO" id="GO:0030027">
    <property type="term" value="C:lamellipodium"/>
    <property type="evidence" value="ECO:0000250"/>
    <property type="project" value="UniProtKB"/>
</dbReference>
<dbReference type="GO" id="GO:0014069">
    <property type="term" value="C:postsynaptic density"/>
    <property type="evidence" value="ECO:0000250"/>
    <property type="project" value="UniProtKB"/>
</dbReference>
<dbReference type="GO" id="GO:0032991">
    <property type="term" value="C:protein-containing complex"/>
    <property type="evidence" value="ECO:0000250"/>
    <property type="project" value="UniProtKB"/>
</dbReference>
<dbReference type="GO" id="GO:0001726">
    <property type="term" value="C:ruffle"/>
    <property type="evidence" value="ECO:0000250"/>
    <property type="project" value="UniProtKB"/>
</dbReference>
<dbReference type="GO" id="GO:0031982">
    <property type="term" value="C:vesicle"/>
    <property type="evidence" value="ECO:0000250"/>
    <property type="project" value="UniProtKB"/>
</dbReference>
<dbReference type="GO" id="GO:0005085">
    <property type="term" value="F:guanyl-nucleotide exchange factor activity"/>
    <property type="evidence" value="ECO:0000318"/>
    <property type="project" value="GO_Central"/>
</dbReference>
<dbReference type="GO" id="GO:0042803">
    <property type="term" value="F:protein homodimerization activity"/>
    <property type="evidence" value="ECO:0000250"/>
    <property type="project" value="UniProtKB"/>
</dbReference>
<dbReference type="GO" id="GO:0043539">
    <property type="term" value="F:protein serine/threonine kinase activator activity"/>
    <property type="evidence" value="ECO:0000250"/>
    <property type="project" value="UniProtKB"/>
</dbReference>
<dbReference type="GO" id="GO:0031267">
    <property type="term" value="F:small GTPase binding"/>
    <property type="evidence" value="ECO:0000250"/>
    <property type="project" value="UniProtKB"/>
</dbReference>
<dbReference type="GO" id="GO:0001662">
    <property type="term" value="P:behavioral fear response"/>
    <property type="evidence" value="ECO:0000250"/>
    <property type="project" value="UniProtKB"/>
</dbReference>
<dbReference type="GO" id="GO:0016197">
    <property type="term" value="P:endosomal transport"/>
    <property type="evidence" value="ECO:0000250"/>
    <property type="project" value="UniProtKB"/>
</dbReference>
<dbReference type="GO" id="GO:0007626">
    <property type="term" value="P:locomotory behavior"/>
    <property type="evidence" value="ECO:0000250"/>
    <property type="project" value="UniProtKB"/>
</dbReference>
<dbReference type="GO" id="GO:0007528">
    <property type="term" value="P:neuromuscular junction development"/>
    <property type="evidence" value="ECO:0000250"/>
    <property type="project" value="UniProtKB"/>
</dbReference>
<dbReference type="GO" id="GO:0048812">
    <property type="term" value="P:neuron projection morphogenesis"/>
    <property type="evidence" value="ECO:0000250"/>
    <property type="project" value="UniProtKB"/>
</dbReference>
<dbReference type="GO" id="GO:0008104">
    <property type="term" value="P:protein localization"/>
    <property type="evidence" value="ECO:0000250"/>
    <property type="project" value="UniProtKB"/>
</dbReference>
<dbReference type="GO" id="GO:0001881">
    <property type="term" value="P:receptor recycling"/>
    <property type="evidence" value="ECO:0000250"/>
    <property type="project" value="UniProtKB"/>
</dbReference>
<dbReference type="GO" id="GO:0051036">
    <property type="term" value="P:regulation of endosome size"/>
    <property type="evidence" value="ECO:0000250"/>
    <property type="project" value="UniProtKB"/>
</dbReference>
<dbReference type="GO" id="GO:0006979">
    <property type="term" value="P:response to oxidative stress"/>
    <property type="evidence" value="ECO:0000250"/>
    <property type="project" value="UniProtKB"/>
</dbReference>
<dbReference type="GO" id="GO:0035249">
    <property type="term" value="P:synaptic transmission, glutamatergic"/>
    <property type="evidence" value="ECO:0000250"/>
    <property type="project" value="UniProtKB"/>
</dbReference>
<dbReference type="GO" id="GO:0016050">
    <property type="term" value="P:vesicle organization"/>
    <property type="evidence" value="ECO:0000250"/>
    <property type="project" value="UniProtKB"/>
</dbReference>
<dbReference type="CDD" id="cd13269">
    <property type="entry name" value="PH_alsin"/>
    <property type="match status" value="1"/>
</dbReference>
<dbReference type="FunFam" id="1.20.900.10:FF:000026">
    <property type="entry name" value="Alsin isoform X1"/>
    <property type="match status" value="1"/>
</dbReference>
<dbReference type="FunFam" id="1.20.1050.80:FF:000005">
    <property type="entry name" value="alsin isoform X1"/>
    <property type="match status" value="1"/>
</dbReference>
<dbReference type="FunFam" id="2.130.10.30:FF:000015">
    <property type="entry name" value="alsin isoform X1"/>
    <property type="match status" value="1"/>
</dbReference>
<dbReference type="FunFam" id="2.130.10.30:FF:000019">
    <property type="entry name" value="alsin isoform X1"/>
    <property type="match status" value="1"/>
</dbReference>
<dbReference type="FunFam" id="2.20.110.10:FF:000009">
    <property type="entry name" value="alsin isoform X1"/>
    <property type="match status" value="1"/>
</dbReference>
<dbReference type="FunFam" id="2.30.29.30:FF:000273">
    <property type="entry name" value="alsin isoform X3"/>
    <property type="match status" value="1"/>
</dbReference>
<dbReference type="Gene3D" id="1.20.900.10">
    <property type="entry name" value="Dbl homology (DH) domain"/>
    <property type="match status" value="1"/>
</dbReference>
<dbReference type="Gene3D" id="2.20.110.10">
    <property type="entry name" value="Histone H3 K4-specific methyltransferase SET7/9 N-terminal domain"/>
    <property type="match status" value="3"/>
</dbReference>
<dbReference type="Gene3D" id="2.30.29.30">
    <property type="entry name" value="Pleckstrin-homology domain (PH domain)/Phosphotyrosine-binding domain (PTB)"/>
    <property type="match status" value="1"/>
</dbReference>
<dbReference type="Gene3D" id="2.130.10.30">
    <property type="entry name" value="Regulator of chromosome condensation 1/beta-lactamase-inhibitor protein II"/>
    <property type="match status" value="2"/>
</dbReference>
<dbReference type="Gene3D" id="1.20.1050.80">
    <property type="entry name" value="VPS9 domain"/>
    <property type="match status" value="1"/>
</dbReference>
<dbReference type="InterPro" id="IPR051984">
    <property type="entry name" value="Alsin_GEFs/MotNeuronReg"/>
</dbReference>
<dbReference type="InterPro" id="IPR035899">
    <property type="entry name" value="DBL_dom_sf"/>
</dbReference>
<dbReference type="InterPro" id="IPR000219">
    <property type="entry name" value="DH_dom"/>
</dbReference>
<dbReference type="InterPro" id="IPR003409">
    <property type="entry name" value="MORN"/>
</dbReference>
<dbReference type="InterPro" id="IPR011993">
    <property type="entry name" value="PH-like_dom_sf"/>
</dbReference>
<dbReference type="InterPro" id="IPR009091">
    <property type="entry name" value="RCC1/BLIP-II"/>
</dbReference>
<dbReference type="InterPro" id="IPR000408">
    <property type="entry name" value="Reg_chr_condens"/>
</dbReference>
<dbReference type="InterPro" id="IPR003123">
    <property type="entry name" value="VPS9"/>
</dbReference>
<dbReference type="InterPro" id="IPR037191">
    <property type="entry name" value="VPS9_dom_sf"/>
</dbReference>
<dbReference type="PANTHER" id="PTHR46089:SF3">
    <property type="entry name" value="ALSIN"/>
    <property type="match status" value="1"/>
</dbReference>
<dbReference type="PANTHER" id="PTHR46089">
    <property type="entry name" value="ALSIN HOMOLOG"/>
    <property type="match status" value="1"/>
</dbReference>
<dbReference type="Pfam" id="PF25389">
    <property type="entry name" value="DH_alsin"/>
    <property type="match status" value="1"/>
</dbReference>
<dbReference type="Pfam" id="PF02493">
    <property type="entry name" value="MORN"/>
    <property type="match status" value="8"/>
</dbReference>
<dbReference type="Pfam" id="PF25383">
    <property type="entry name" value="PH_alsin"/>
    <property type="match status" value="1"/>
</dbReference>
<dbReference type="Pfam" id="PF00415">
    <property type="entry name" value="RCC1"/>
    <property type="match status" value="4"/>
</dbReference>
<dbReference type="Pfam" id="PF02204">
    <property type="entry name" value="VPS9"/>
    <property type="match status" value="1"/>
</dbReference>
<dbReference type="PRINTS" id="PR00633">
    <property type="entry name" value="RCCNDNSATION"/>
</dbReference>
<dbReference type="SMART" id="SM00698">
    <property type="entry name" value="MORN"/>
    <property type="match status" value="8"/>
</dbReference>
<dbReference type="SUPFAM" id="SSF48065">
    <property type="entry name" value="DBL homology domain (DH-domain)"/>
    <property type="match status" value="1"/>
</dbReference>
<dbReference type="SUPFAM" id="SSF82185">
    <property type="entry name" value="Histone H3 K4-specific methyltransferase SET7/9 N-terminal domain"/>
    <property type="match status" value="2"/>
</dbReference>
<dbReference type="SUPFAM" id="SSF50729">
    <property type="entry name" value="PH domain-like"/>
    <property type="match status" value="1"/>
</dbReference>
<dbReference type="SUPFAM" id="SSF50985">
    <property type="entry name" value="RCC1/BLIP-II"/>
    <property type="match status" value="2"/>
</dbReference>
<dbReference type="SUPFAM" id="SSF109993">
    <property type="entry name" value="VPS9 domain"/>
    <property type="match status" value="1"/>
</dbReference>
<dbReference type="PROSITE" id="PS50010">
    <property type="entry name" value="DH_2"/>
    <property type="match status" value="1"/>
</dbReference>
<dbReference type="PROSITE" id="PS00626">
    <property type="entry name" value="RCC1_2"/>
    <property type="match status" value="2"/>
</dbReference>
<dbReference type="PROSITE" id="PS50012">
    <property type="entry name" value="RCC1_3"/>
    <property type="match status" value="5"/>
</dbReference>
<dbReference type="PROSITE" id="PS51205">
    <property type="entry name" value="VPS9"/>
    <property type="match status" value="1"/>
</dbReference>
<proteinExistence type="evidence at transcript level"/>
<name>ALS2_PANTR</name>
<evidence type="ECO:0000250" key="1"/>
<evidence type="ECO:0000250" key="2">
    <source>
        <dbReference type="UniProtKB" id="P0C5Y8"/>
    </source>
</evidence>
<evidence type="ECO:0000250" key="3">
    <source>
        <dbReference type="UniProtKB" id="Q96Q42"/>
    </source>
</evidence>
<evidence type="ECO:0000255" key="4">
    <source>
        <dbReference type="PROSITE-ProRule" id="PRU00062"/>
    </source>
</evidence>
<evidence type="ECO:0000255" key="5">
    <source>
        <dbReference type="PROSITE-ProRule" id="PRU00550"/>
    </source>
</evidence>
<evidence type="ECO:0000256" key="6">
    <source>
        <dbReference type="SAM" id="MobiDB-lite"/>
    </source>
</evidence>
<gene>
    <name type="primary">ALS2</name>
</gene>
<protein>
    <recommendedName>
        <fullName>Alsin</fullName>
    </recommendedName>
    <alternativeName>
        <fullName>Amyotrophic lateral sclerosis 2 protein homolog</fullName>
    </alternativeName>
</protein>
<feature type="chain" id="PRO_0000080905" description="Alsin">
    <location>
        <begin position="1"/>
        <end position="1657"/>
    </location>
</feature>
<feature type="repeat" description="RCC1 1">
    <location>
        <begin position="60"/>
        <end position="109"/>
    </location>
</feature>
<feature type="repeat" description="RCC1 2">
    <location>
        <begin position="110"/>
        <end position="168"/>
    </location>
</feature>
<feature type="repeat" description="RCC1 3">
    <location>
        <begin position="169"/>
        <end position="219"/>
    </location>
</feature>
<feature type="repeat" description="RCC1 4">
    <location>
        <begin position="526"/>
        <end position="577"/>
    </location>
</feature>
<feature type="repeat" description="RCC1 5">
    <location>
        <begin position="578"/>
        <end position="628"/>
    </location>
</feature>
<feature type="domain" description="DH" evidence="4">
    <location>
        <begin position="690"/>
        <end position="885"/>
    </location>
</feature>
<feature type="domain" description="PH">
    <location>
        <begin position="901"/>
        <end position="1007"/>
    </location>
</feature>
<feature type="repeat" description="MORN 1">
    <location>
        <begin position="1049"/>
        <end position="1071"/>
    </location>
</feature>
<feature type="repeat" description="MORN 2">
    <location>
        <begin position="1072"/>
        <end position="1094"/>
    </location>
</feature>
<feature type="repeat" description="MORN 3">
    <location>
        <begin position="1100"/>
        <end position="1122"/>
    </location>
</feature>
<feature type="repeat" description="MORN 4">
    <location>
        <begin position="1123"/>
        <end position="1145"/>
    </location>
</feature>
<feature type="repeat" description="MORN 5">
    <location>
        <begin position="1151"/>
        <end position="1173"/>
    </location>
</feature>
<feature type="repeat" description="MORN 6">
    <location>
        <begin position="1175"/>
        <end position="1197"/>
    </location>
</feature>
<feature type="repeat" description="MORN 7">
    <location>
        <begin position="1198"/>
        <end position="1220"/>
    </location>
</feature>
<feature type="repeat" description="MORN 8">
    <location>
        <begin position="1221"/>
        <end position="1244"/>
    </location>
</feature>
<feature type="domain" description="VPS9" evidence="5">
    <location>
        <begin position="1513"/>
        <end position="1657"/>
    </location>
</feature>
<feature type="region of interest" description="Disordered" evidence="6">
    <location>
        <begin position="432"/>
        <end position="481"/>
    </location>
</feature>
<feature type="compositionally biased region" description="Basic and acidic residues" evidence="6">
    <location>
        <begin position="445"/>
        <end position="455"/>
    </location>
</feature>
<feature type="compositionally biased region" description="Polar residues" evidence="6">
    <location>
        <begin position="456"/>
        <end position="467"/>
    </location>
</feature>
<feature type="modified residue" description="Phosphoserine" evidence="3">
    <location>
        <position position="465"/>
    </location>
</feature>
<feature type="modified residue" description="Phosphoserine" evidence="3">
    <location>
        <position position="466"/>
    </location>
</feature>
<feature type="modified residue" description="Phosphoserine" evidence="3">
    <location>
        <position position="483"/>
    </location>
</feature>
<feature type="modified residue" description="Phosphoserine" evidence="3">
    <location>
        <position position="492"/>
    </location>
</feature>
<feature type="modified residue" description="Phosphothreonine" evidence="2">
    <location>
        <position position="510"/>
    </location>
</feature>
<feature type="modified residue" description="N6-acetyllysine" evidence="3">
    <location>
        <position position="533"/>
    </location>
</feature>
<feature type="modified residue" description="Phosphoserine" evidence="2">
    <location>
        <position position="1335"/>
    </location>
</feature>
<organism>
    <name type="scientific">Pan troglodytes</name>
    <name type="common">Chimpanzee</name>
    <dbReference type="NCBI Taxonomy" id="9598"/>
    <lineage>
        <taxon>Eukaryota</taxon>
        <taxon>Metazoa</taxon>
        <taxon>Chordata</taxon>
        <taxon>Craniata</taxon>
        <taxon>Vertebrata</taxon>
        <taxon>Euteleostomi</taxon>
        <taxon>Mammalia</taxon>
        <taxon>Eutheria</taxon>
        <taxon>Euarchontoglires</taxon>
        <taxon>Primates</taxon>
        <taxon>Haplorrhini</taxon>
        <taxon>Catarrhini</taxon>
        <taxon>Hominidae</taxon>
        <taxon>Pan</taxon>
    </lineage>
</organism>
<comment type="function">
    <text evidence="1">May act as a GTPase regulator. Controls survival and growth of spinal motoneurons (By similarity).</text>
</comment>
<comment type="subunit">
    <text evidence="1">Forms a heteromeric complex with ALS2CL. Interacts with ALS2CL (By similarity).</text>
</comment>
<keyword id="KW-0007">Acetylation</keyword>
<keyword id="KW-0344">Guanine-nucleotide releasing factor</keyword>
<keyword id="KW-0597">Phosphoprotein</keyword>
<keyword id="KW-1185">Reference proteome</keyword>
<keyword id="KW-0677">Repeat</keyword>
<reference key="1">
    <citation type="journal article" date="2005" name="Nature">
        <title>Initial sequence of the chimpanzee genome and comparison with the human genome.</title>
        <authorList>
            <consortium name="Chimpanzee sequencing and analysis consortium"/>
        </authorList>
    </citation>
    <scope>NUCLEOTIDE SEQUENCE [LARGE SCALE GENOMIC DNA]</scope>
</reference>
<reference key="2">
    <citation type="journal article" date="2005" name="Neurobiol. Dis.">
        <title>Cross-species characterization of the ALS2 gene and analysis of its pattern of expression in development and adulthood.</title>
        <authorList>
            <person name="Devon R.S."/>
            <person name="Schwab C."/>
            <person name="Topp J.D."/>
            <person name="Orban P.C."/>
            <person name="Yang Y.Z."/>
            <person name="Pape T.D."/>
            <person name="Helm J.R."/>
            <person name="Davidson T.L."/>
            <person name="Rogers D.A."/>
            <person name="Gros-Louis F."/>
            <person name="Rouleau G."/>
            <person name="Horazdovsky B.F."/>
            <person name="Leavitt B.R."/>
            <person name="Hayden M.R."/>
        </authorList>
    </citation>
    <scope>IDENTIFICATION</scope>
</reference>